<sequence length="945" mass="105680">MSNKKADSKPQAKYPVNLLDTPFPMRGDLPKREPQWVEDWEARGVYEKIRAASQGRPKFILHDGPPYANGDIHLGHAVNKILKDMVVKSRNMAGFDAPYVPGWDCHGMPIEIQIEKRFGKSLPAAEVMAKARAYATEQIEKQKVGFKRLGVLGEWGNPYKTMNFQNEAEEIRALGKIIEKGYVYRGLKPVNWCFDCGSALAEAEVEYKDRTDPTIDVLFAFAEPEKTAHAFGLAELPRAEGGIVIWTTTPWTIPANQALNLHPEIVYALVDTERGLLVMAEERVEACMKDFGLTGRVIARTPGEKLANLRFHHPLAAAHPGYKRTSPVYLGDYVTTDTGTGVVHSSPAYGVEDFTSCKAHGMTDSDIINPVMGDGRYIESLPLFGGLTIWDANPKIVDALKAAGSLLRNERYAHSYMHCWRHKTPIIYRATSQWFAGMDTQPAGGGKTLRETALDAVDATAFYPSWGKQRLHAMIANRPDWTLSRQRQWGVPMAFFVHKETGELHPRTLELLEEVAKRVERQGIEAWQTLDARELIGDDANLYEKNRDTLDVWFDSGTTHWHVLRGSHKDQLQFPADLYLEGSDQHRGWFHSSLLTASMLDGRAPYKGLLTHGFTVDGEGRKMSKSLGNGIDPHEVANRLGAEIIRLWIASTDYSGELAISEEILKRVTEGYRRIRNTLRFLLANLSDFDYAKDALPAGQWLEIDRYAVAFAAQLQAELLAHYEKYEFHPVVAKLQTFCSEDLGGFYLDVLKDRLYTSAPASPARRSAQTALYHVTQGLLRVLAPFLSFTAEEAWRVFQPQSDTIFTETYYAYPEIAGAEALIAKWTLLRDVRGDVTKALEEARTANRIGSSLQAQVEVRASGARYDALASLGDDLKFVLITSAATVVKVDAQGDESVDVAASTYPKCERCWHYREDVGAHADHPTLCGRCFSNLFENGETRSAA</sequence>
<name>SYI1_BURMA</name>
<accession>Q62HL4</accession>
<dbReference type="EC" id="6.1.1.5" evidence="1"/>
<dbReference type="EMBL" id="CP000010">
    <property type="protein sequence ID" value="AAU50245.1"/>
    <property type="molecule type" value="Genomic_DNA"/>
</dbReference>
<dbReference type="RefSeq" id="YP_103806.1">
    <property type="nucleotide sequence ID" value="NC_006348.1"/>
</dbReference>
<dbReference type="SMR" id="Q62HL4"/>
<dbReference type="KEGG" id="bma:BMA2242"/>
<dbReference type="PATRIC" id="fig|243160.12.peg.2307"/>
<dbReference type="eggNOG" id="COG0060">
    <property type="taxonomic scope" value="Bacteria"/>
</dbReference>
<dbReference type="HOGENOM" id="CLU_001493_7_1_4"/>
<dbReference type="Proteomes" id="UP000006693">
    <property type="component" value="Chromosome 1"/>
</dbReference>
<dbReference type="GO" id="GO:0005829">
    <property type="term" value="C:cytosol"/>
    <property type="evidence" value="ECO:0007669"/>
    <property type="project" value="TreeGrafter"/>
</dbReference>
<dbReference type="GO" id="GO:0002161">
    <property type="term" value="F:aminoacyl-tRNA deacylase activity"/>
    <property type="evidence" value="ECO:0007669"/>
    <property type="project" value="InterPro"/>
</dbReference>
<dbReference type="GO" id="GO:0005524">
    <property type="term" value="F:ATP binding"/>
    <property type="evidence" value="ECO:0007669"/>
    <property type="project" value="UniProtKB-UniRule"/>
</dbReference>
<dbReference type="GO" id="GO:0004822">
    <property type="term" value="F:isoleucine-tRNA ligase activity"/>
    <property type="evidence" value="ECO:0007669"/>
    <property type="project" value="UniProtKB-UniRule"/>
</dbReference>
<dbReference type="GO" id="GO:0000049">
    <property type="term" value="F:tRNA binding"/>
    <property type="evidence" value="ECO:0007669"/>
    <property type="project" value="InterPro"/>
</dbReference>
<dbReference type="GO" id="GO:0008270">
    <property type="term" value="F:zinc ion binding"/>
    <property type="evidence" value="ECO:0007669"/>
    <property type="project" value="UniProtKB-UniRule"/>
</dbReference>
<dbReference type="GO" id="GO:0006428">
    <property type="term" value="P:isoleucyl-tRNA aminoacylation"/>
    <property type="evidence" value="ECO:0007669"/>
    <property type="project" value="UniProtKB-UniRule"/>
</dbReference>
<dbReference type="CDD" id="cd07960">
    <property type="entry name" value="Anticodon_Ia_Ile_BEm"/>
    <property type="match status" value="1"/>
</dbReference>
<dbReference type="CDD" id="cd00818">
    <property type="entry name" value="IleRS_core"/>
    <property type="match status" value="1"/>
</dbReference>
<dbReference type="FunFam" id="3.40.50.620:FF:000042">
    <property type="entry name" value="Isoleucine--tRNA ligase"/>
    <property type="match status" value="1"/>
</dbReference>
<dbReference type="FunFam" id="3.40.50.620:FF:000048">
    <property type="entry name" value="Isoleucine--tRNA ligase"/>
    <property type="match status" value="1"/>
</dbReference>
<dbReference type="Gene3D" id="1.10.730.20">
    <property type="match status" value="1"/>
</dbReference>
<dbReference type="Gene3D" id="3.40.50.620">
    <property type="entry name" value="HUPs"/>
    <property type="match status" value="2"/>
</dbReference>
<dbReference type="Gene3D" id="3.90.740.10">
    <property type="entry name" value="Valyl/Leucyl/Isoleucyl-tRNA synthetase, editing domain"/>
    <property type="match status" value="1"/>
</dbReference>
<dbReference type="HAMAP" id="MF_02002">
    <property type="entry name" value="Ile_tRNA_synth_type1"/>
    <property type="match status" value="1"/>
</dbReference>
<dbReference type="InterPro" id="IPR001412">
    <property type="entry name" value="aa-tRNA-synth_I_CS"/>
</dbReference>
<dbReference type="InterPro" id="IPR002300">
    <property type="entry name" value="aa-tRNA-synth_Ia"/>
</dbReference>
<dbReference type="InterPro" id="IPR033708">
    <property type="entry name" value="Anticodon_Ile_BEm"/>
</dbReference>
<dbReference type="InterPro" id="IPR002301">
    <property type="entry name" value="Ile-tRNA-ligase"/>
</dbReference>
<dbReference type="InterPro" id="IPR023585">
    <property type="entry name" value="Ile-tRNA-ligase_type1"/>
</dbReference>
<dbReference type="InterPro" id="IPR050081">
    <property type="entry name" value="Ile-tRNA_ligase"/>
</dbReference>
<dbReference type="InterPro" id="IPR013155">
    <property type="entry name" value="M/V/L/I-tRNA-synth_anticd-bd"/>
</dbReference>
<dbReference type="InterPro" id="IPR014729">
    <property type="entry name" value="Rossmann-like_a/b/a_fold"/>
</dbReference>
<dbReference type="InterPro" id="IPR009080">
    <property type="entry name" value="tRNAsynth_Ia_anticodon-bd"/>
</dbReference>
<dbReference type="InterPro" id="IPR009008">
    <property type="entry name" value="Val/Leu/Ile-tRNA-synth_edit"/>
</dbReference>
<dbReference type="InterPro" id="IPR010663">
    <property type="entry name" value="Znf_FPG/IleRS"/>
</dbReference>
<dbReference type="NCBIfam" id="TIGR00392">
    <property type="entry name" value="ileS"/>
    <property type="match status" value="1"/>
</dbReference>
<dbReference type="PANTHER" id="PTHR42765:SF1">
    <property type="entry name" value="ISOLEUCINE--TRNA LIGASE, MITOCHONDRIAL"/>
    <property type="match status" value="1"/>
</dbReference>
<dbReference type="PANTHER" id="PTHR42765">
    <property type="entry name" value="SOLEUCYL-TRNA SYNTHETASE"/>
    <property type="match status" value="1"/>
</dbReference>
<dbReference type="Pfam" id="PF08264">
    <property type="entry name" value="Anticodon_1"/>
    <property type="match status" value="1"/>
</dbReference>
<dbReference type="Pfam" id="PF00133">
    <property type="entry name" value="tRNA-synt_1"/>
    <property type="match status" value="1"/>
</dbReference>
<dbReference type="Pfam" id="PF06827">
    <property type="entry name" value="zf-FPG_IleRS"/>
    <property type="match status" value="1"/>
</dbReference>
<dbReference type="PRINTS" id="PR00984">
    <property type="entry name" value="TRNASYNTHILE"/>
</dbReference>
<dbReference type="SUPFAM" id="SSF47323">
    <property type="entry name" value="Anticodon-binding domain of a subclass of class I aminoacyl-tRNA synthetases"/>
    <property type="match status" value="1"/>
</dbReference>
<dbReference type="SUPFAM" id="SSF52374">
    <property type="entry name" value="Nucleotidylyl transferase"/>
    <property type="match status" value="1"/>
</dbReference>
<dbReference type="SUPFAM" id="SSF50677">
    <property type="entry name" value="ValRS/IleRS/LeuRS editing domain"/>
    <property type="match status" value="1"/>
</dbReference>
<dbReference type="PROSITE" id="PS00178">
    <property type="entry name" value="AA_TRNA_LIGASE_I"/>
    <property type="match status" value="1"/>
</dbReference>
<comment type="function">
    <text evidence="1">Catalyzes the attachment of isoleucine to tRNA(Ile). As IleRS can inadvertently accommodate and process structurally similar amino acids such as valine, to avoid such errors it has two additional distinct tRNA(Ile)-dependent editing activities. One activity is designated as 'pretransfer' editing and involves the hydrolysis of activated Val-AMP. The other activity is designated 'posttransfer' editing and involves deacylation of mischarged Val-tRNA(Ile).</text>
</comment>
<comment type="catalytic activity">
    <reaction evidence="1">
        <text>tRNA(Ile) + L-isoleucine + ATP = L-isoleucyl-tRNA(Ile) + AMP + diphosphate</text>
        <dbReference type="Rhea" id="RHEA:11060"/>
        <dbReference type="Rhea" id="RHEA-COMP:9666"/>
        <dbReference type="Rhea" id="RHEA-COMP:9695"/>
        <dbReference type="ChEBI" id="CHEBI:30616"/>
        <dbReference type="ChEBI" id="CHEBI:33019"/>
        <dbReference type="ChEBI" id="CHEBI:58045"/>
        <dbReference type="ChEBI" id="CHEBI:78442"/>
        <dbReference type="ChEBI" id="CHEBI:78528"/>
        <dbReference type="ChEBI" id="CHEBI:456215"/>
        <dbReference type="EC" id="6.1.1.5"/>
    </reaction>
</comment>
<comment type="cofactor">
    <cofactor evidence="1">
        <name>Zn(2+)</name>
        <dbReference type="ChEBI" id="CHEBI:29105"/>
    </cofactor>
    <text evidence="1">Binds 1 zinc ion per subunit.</text>
</comment>
<comment type="subunit">
    <text evidence="1">Monomer.</text>
</comment>
<comment type="subcellular location">
    <subcellularLocation>
        <location evidence="1">Cytoplasm</location>
    </subcellularLocation>
</comment>
<comment type="domain">
    <text evidence="1">IleRS has two distinct active sites: one for aminoacylation and one for editing. The misactivated valine is translocated from the active site to the editing site, which sterically excludes the correctly activated isoleucine. The single editing site contains two valyl binding pockets, one specific for each substrate (Val-AMP or Val-tRNA(Ile)).</text>
</comment>
<comment type="similarity">
    <text evidence="1">Belongs to the class-I aminoacyl-tRNA synthetase family. IleS type 1 subfamily.</text>
</comment>
<proteinExistence type="inferred from homology"/>
<evidence type="ECO:0000255" key="1">
    <source>
        <dbReference type="HAMAP-Rule" id="MF_02002"/>
    </source>
</evidence>
<reference key="1">
    <citation type="journal article" date="2004" name="Proc. Natl. Acad. Sci. U.S.A.">
        <title>Structural flexibility in the Burkholderia mallei genome.</title>
        <authorList>
            <person name="Nierman W.C."/>
            <person name="DeShazer D."/>
            <person name="Kim H.S."/>
            <person name="Tettelin H."/>
            <person name="Nelson K.E."/>
            <person name="Feldblyum T.V."/>
            <person name="Ulrich R.L."/>
            <person name="Ronning C.M."/>
            <person name="Brinkac L.M."/>
            <person name="Daugherty S.C."/>
            <person name="Davidsen T.D."/>
            <person name="DeBoy R.T."/>
            <person name="Dimitrov G."/>
            <person name="Dodson R.J."/>
            <person name="Durkin A.S."/>
            <person name="Gwinn M.L."/>
            <person name="Haft D.H."/>
            <person name="Khouri H.M."/>
            <person name="Kolonay J.F."/>
            <person name="Madupu R."/>
            <person name="Mohammoud Y."/>
            <person name="Nelson W.C."/>
            <person name="Radune D."/>
            <person name="Romero C.M."/>
            <person name="Sarria S."/>
            <person name="Selengut J."/>
            <person name="Shamblin C."/>
            <person name="Sullivan S.A."/>
            <person name="White O."/>
            <person name="Yu Y."/>
            <person name="Zafar N."/>
            <person name="Zhou L."/>
            <person name="Fraser C.M."/>
        </authorList>
    </citation>
    <scope>NUCLEOTIDE SEQUENCE [LARGE SCALE GENOMIC DNA]</scope>
    <source>
        <strain>ATCC 23344</strain>
    </source>
</reference>
<keyword id="KW-0030">Aminoacyl-tRNA synthetase</keyword>
<keyword id="KW-0067">ATP-binding</keyword>
<keyword id="KW-0963">Cytoplasm</keyword>
<keyword id="KW-0436">Ligase</keyword>
<keyword id="KW-0479">Metal-binding</keyword>
<keyword id="KW-0547">Nucleotide-binding</keyword>
<keyword id="KW-0648">Protein biosynthesis</keyword>
<keyword id="KW-1185">Reference proteome</keyword>
<keyword id="KW-0862">Zinc</keyword>
<gene>
    <name evidence="1" type="primary">ileS1</name>
    <name type="synonym">ileS-1</name>
    <name type="ordered locus">BMA2242</name>
</gene>
<feature type="chain" id="PRO_0000098368" description="Isoleucine--tRNA ligase 1">
    <location>
        <begin position="1"/>
        <end position="945"/>
    </location>
</feature>
<feature type="short sequence motif" description="'HIGH' region">
    <location>
        <begin position="66"/>
        <end position="76"/>
    </location>
</feature>
<feature type="short sequence motif" description="'KMSKS' region">
    <location>
        <begin position="622"/>
        <end position="626"/>
    </location>
</feature>
<feature type="binding site" evidence="1">
    <location>
        <position position="581"/>
    </location>
    <ligand>
        <name>L-isoleucyl-5'-AMP</name>
        <dbReference type="ChEBI" id="CHEBI:178002"/>
    </ligand>
</feature>
<feature type="binding site" evidence="1">
    <location>
        <position position="625"/>
    </location>
    <ligand>
        <name>ATP</name>
        <dbReference type="ChEBI" id="CHEBI:30616"/>
    </ligand>
</feature>
<feature type="binding site" evidence="1">
    <location>
        <position position="908"/>
    </location>
    <ligand>
        <name>Zn(2+)</name>
        <dbReference type="ChEBI" id="CHEBI:29105"/>
    </ligand>
</feature>
<feature type="binding site" evidence="1">
    <location>
        <position position="911"/>
    </location>
    <ligand>
        <name>Zn(2+)</name>
        <dbReference type="ChEBI" id="CHEBI:29105"/>
    </ligand>
</feature>
<feature type="binding site" evidence="1">
    <location>
        <position position="928"/>
    </location>
    <ligand>
        <name>Zn(2+)</name>
        <dbReference type="ChEBI" id="CHEBI:29105"/>
    </ligand>
</feature>
<feature type="binding site" evidence="1">
    <location>
        <position position="931"/>
    </location>
    <ligand>
        <name>Zn(2+)</name>
        <dbReference type="ChEBI" id="CHEBI:29105"/>
    </ligand>
</feature>
<protein>
    <recommendedName>
        <fullName evidence="1">Isoleucine--tRNA ligase 1</fullName>
        <ecNumber evidence="1">6.1.1.5</ecNumber>
    </recommendedName>
    <alternativeName>
        <fullName evidence="1">Isoleucyl-tRNA synthetase 1</fullName>
        <shortName evidence="1">IleRS 1</shortName>
    </alternativeName>
</protein>
<organism>
    <name type="scientific">Burkholderia mallei (strain ATCC 23344)</name>
    <dbReference type="NCBI Taxonomy" id="243160"/>
    <lineage>
        <taxon>Bacteria</taxon>
        <taxon>Pseudomonadati</taxon>
        <taxon>Pseudomonadota</taxon>
        <taxon>Betaproteobacteria</taxon>
        <taxon>Burkholderiales</taxon>
        <taxon>Burkholderiaceae</taxon>
        <taxon>Burkholderia</taxon>
        <taxon>pseudomallei group</taxon>
    </lineage>
</organism>